<proteinExistence type="inferred from homology"/>
<keyword id="KW-0029">Amino-acid transport</keyword>
<keyword id="KW-0997">Cell inner membrane</keyword>
<keyword id="KW-1003">Cell membrane</keyword>
<keyword id="KW-0472">Membrane</keyword>
<keyword id="KW-1185">Reference proteome</keyword>
<keyword id="KW-0769">Symport</keyword>
<keyword id="KW-0812">Transmembrane</keyword>
<keyword id="KW-1133">Transmembrane helix</keyword>
<keyword id="KW-0813">Transport</keyword>
<organism>
    <name type="scientific">Shigella boydii serotype 18 (strain CDC 3083-94 / BS512)</name>
    <dbReference type="NCBI Taxonomy" id="344609"/>
    <lineage>
        <taxon>Bacteria</taxon>
        <taxon>Pseudomonadati</taxon>
        <taxon>Pseudomonadota</taxon>
        <taxon>Gammaproteobacteria</taxon>
        <taxon>Enterobacterales</taxon>
        <taxon>Enterobacteriaceae</taxon>
        <taxon>Shigella</taxon>
    </lineage>
</organism>
<sequence>MSTSDSIVSSQTKQSSWRKSDTTWTLGLFGTAIGAGVLFFPIRAGFGGLIPILLMLVLAYPIAFYCHRALARLCLSGSNPSGNITETVEEHFGKTGGVVITFLYFFAICPLLWIYGVTITNTFMTFWENQLGFAPLNRGFVALFLLLLMAFVIWFGKDLMVKVMSYLVWPFIASLVLISLSLIPYWNSAVIDQVDLGSLSLTGHDGILITVWLGISIMVFSFNFSPIVSSFVVSKREEYEKDFGRDFTERKCSQIISRASMLMVAVVMFFAFSCLFTLSPANMAEAKAQNIPVLSYLANHFASMTGTKTTFAITLEYAASIIALVAIFKSFFGHYLGTLEGLNGLILKFGYKGDKTKVSLGKLNTISMIFIMGSTWVVAYANPNILDLIEAMGAPIIASLLCLLPMYAIRKAPSLAKYRGRLDNVFVTVIGLLTILNIVYKLF</sequence>
<accession>B2U0A0</accession>
<evidence type="ECO:0000255" key="1">
    <source>
        <dbReference type="HAMAP-Rule" id="MF_01583"/>
    </source>
</evidence>
<name>TDCC_SHIB3</name>
<protein>
    <recommendedName>
        <fullName evidence="1">Threonine/serine transporter TdcC</fullName>
    </recommendedName>
    <alternativeName>
        <fullName evidence="1">H(+)/threonine-serine symporter</fullName>
    </alternativeName>
</protein>
<reference key="1">
    <citation type="submission" date="2008-05" db="EMBL/GenBank/DDBJ databases">
        <title>Complete sequence of Shigella boydii serotype 18 strain BS512.</title>
        <authorList>
            <person name="Rasko D.A."/>
            <person name="Rosovitz M."/>
            <person name="Maurelli A.T."/>
            <person name="Myers G."/>
            <person name="Seshadri R."/>
            <person name="Cer R."/>
            <person name="Jiang L."/>
            <person name="Ravel J."/>
            <person name="Sebastian Y."/>
        </authorList>
    </citation>
    <scope>NUCLEOTIDE SEQUENCE [LARGE SCALE GENOMIC DNA]</scope>
    <source>
        <strain>CDC 3083-94 / BS512</strain>
    </source>
</reference>
<comment type="function">
    <text evidence="1">Involved in the import of threonine and serine into the cell, with the concomitant import of a proton (symport system).</text>
</comment>
<comment type="catalytic activity">
    <reaction evidence="1">
        <text>L-threonine(in) + H(+)(in) = L-threonine(out) + H(+)(out)</text>
        <dbReference type="Rhea" id="RHEA:28883"/>
        <dbReference type="ChEBI" id="CHEBI:15378"/>
        <dbReference type="ChEBI" id="CHEBI:57926"/>
    </reaction>
    <physiologicalReaction direction="right-to-left" evidence="1">
        <dbReference type="Rhea" id="RHEA:28885"/>
    </physiologicalReaction>
</comment>
<comment type="catalytic activity">
    <reaction evidence="1">
        <text>L-serine(in) + H(+)(in) = L-serine(out) + H(+)(out)</text>
        <dbReference type="Rhea" id="RHEA:28887"/>
        <dbReference type="ChEBI" id="CHEBI:15378"/>
        <dbReference type="ChEBI" id="CHEBI:33384"/>
    </reaction>
    <physiologicalReaction direction="right-to-left" evidence="1">
        <dbReference type="Rhea" id="RHEA:28889"/>
    </physiologicalReaction>
</comment>
<comment type="subcellular location">
    <subcellularLocation>
        <location evidence="1">Cell inner membrane</location>
        <topology evidence="1">Multi-pass membrane protein</topology>
    </subcellularLocation>
</comment>
<comment type="similarity">
    <text evidence="1">Belongs to the amino acid/polyamine transporter 2 family. SdaC/TdcC subfamily.</text>
</comment>
<gene>
    <name evidence="1" type="primary">tdcC</name>
    <name type="ordered locus">SbBS512_E3241</name>
</gene>
<dbReference type="EMBL" id="CP001063">
    <property type="protein sequence ID" value="ACD07507.1"/>
    <property type="molecule type" value="Genomic_DNA"/>
</dbReference>
<dbReference type="RefSeq" id="WP_000107720.1">
    <property type="nucleotide sequence ID" value="NC_010658.1"/>
</dbReference>
<dbReference type="SMR" id="B2U0A0"/>
<dbReference type="STRING" id="344609.SbBS512_E3241"/>
<dbReference type="GeneID" id="75205075"/>
<dbReference type="KEGG" id="sbc:SbBS512_E3241"/>
<dbReference type="HOGENOM" id="CLU_052043_1_1_6"/>
<dbReference type="Proteomes" id="UP000001030">
    <property type="component" value="Chromosome"/>
</dbReference>
<dbReference type="GO" id="GO:0005886">
    <property type="term" value="C:plasma membrane"/>
    <property type="evidence" value="ECO:0007669"/>
    <property type="project" value="UniProtKB-SubCell"/>
</dbReference>
<dbReference type="GO" id="GO:0015194">
    <property type="term" value="F:L-serine transmembrane transporter activity"/>
    <property type="evidence" value="ECO:0007669"/>
    <property type="project" value="InterPro"/>
</dbReference>
<dbReference type="GO" id="GO:0015293">
    <property type="term" value="F:symporter activity"/>
    <property type="evidence" value="ECO:0007669"/>
    <property type="project" value="UniProtKB-UniRule"/>
</dbReference>
<dbReference type="GO" id="GO:0015565">
    <property type="term" value="F:threonine efflux transmembrane transporter activity"/>
    <property type="evidence" value="ECO:0007669"/>
    <property type="project" value="InterPro"/>
</dbReference>
<dbReference type="HAMAP" id="MF_01583">
    <property type="entry name" value="Thr_Ser_transp_TdcC"/>
    <property type="match status" value="1"/>
</dbReference>
<dbReference type="InterPro" id="IPR018227">
    <property type="entry name" value="Amino_acid_transport_2"/>
</dbReference>
<dbReference type="InterPro" id="IPR004694">
    <property type="entry name" value="Hydroxy_aa_transpt"/>
</dbReference>
<dbReference type="InterPro" id="IPR023726">
    <property type="entry name" value="Thr/Ser_transpt_TdcC"/>
</dbReference>
<dbReference type="NCBIfam" id="NF010152">
    <property type="entry name" value="PRK13629.1"/>
    <property type="match status" value="1"/>
</dbReference>
<dbReference type="NCBIfam" id="TIGR00814">
    <property type="entry name" value="stp"/>
    <property type="match status" value="1"/>
</dbReference>
<dbReference type="PANTHER" id="PTHR35334">
    <property type="entry name" value="SERINE TRANSPORTER"/>
    <property type="match status" value="1"/>
</dbReference>
<dbReference type="PANTHER" id="PTHR35334:SF1">
    <property type="entry name" value="THREONINE_SERINE TRANSPORTER TDCC"/>
    <property type="match status" value="1"/>
</dbReference>
<dbReference type="Pfam" id="PF03222">
    <property type="entry name" value="Trp_Tyr_perm"/>
    <property type="match status" value="1"/>
</dbReference>
<feature type="chain" id="PRO_1000147643" description="Threonine/serine transporter TdcC">
    <location>
        <begin position="1"/>
        <end position="443"/>
    </location>
</feature>
<feature type="transmembrane region" description="Helical" evidence="1">
    <location>
        <begin position="22"/>
        <end position="42"/>
    </location>
</feature>
<feature type="transmembrane region" description="Helical" evidence="1">
    <location>
        <begin position="44"/>
        <end position="64"/>
    </location>
</feature>
<feature type="transmembrane region" description="Helical" evidence="1">
    <location>
        <begin position="97"/>
        <end position="117"/>
    </location>
</feature>
<feature type="transmembrane region" description="Helical" evidence="1">
    <location>
        <begin position="140"/>
        <end position="160"/>
    </location>
</feature>
<feature type="transmembrane region" description="Helical" evidence="1">
    <location>
        <begin position="163"/>
        <end position="183"/>
    </location>
</feature>
<feature type="transmembrane region" description="Helical" evidence="1">
    <location>
        <begin position="207"/>
        <end position="227"/>
    </location>
</feature>
<feature type="transmembrane region" description="Helical" evidence="1">
    <location>
        <begin position="261"/>
        <end position="281"/>
    </location>
</feature>
<feature type="transmembrane region" description="Helical" evidence="1">
    <location>
        <begin position="311"/>
        <end position="331"/>
    </location>
</feature>
<feature type="transmembrane region" description="Helical" evidence="1">
    <location>
        <begin position="366"/>
        <end position="386"/>
    </location>
</feature>
<feature type="transmembrane region" description="Helical" evidence="1">
    <location>
        <begin position="389"/>
        <end position="409"/>
    </location>
</feature>
<feature type="transmembrane region" description="Helical" evidence="1">
    <location>
        <begin position="423"/>
        <end position="443"/>
    </location>
</feature>